<dbReference type="EC" id="4.2.1.10" evidence="1"/>
<dbReference type="EMBL" id="CP000560">
    <property type="protein sequence ID" value="ABS73192.1"/>
    <property type="molecule type" value="Genomic_DNA"/>
</dbReference>
<dbReference type="RefSeq" id="WP_012117075.1">
    <property type="nucleotide sequence ID" value="NC_009725.2"/>
</dbReference>
<dbReference type="SMR" id="A7Z2G6"/>
<dbReference type="GeneID" id="93079942"/>
<dbReference type="KEGG" id="bay:RBAM_008080"/>
<dbReference type="HOGENOM" id="CLU_064444_0_0_9"/>
<dbReference type="UniPathway" id="UPA00053">
    <property type="reaction ID" value="UER00086"/>
</dbReference>
<dbReference type="Proteomes" id="UP000001120">
    <property type="component" value="Chromosome"/>
</dbReference>
<dbReference type="GO" id="GO:0003855">
    <property type="term" value="F:3-dehydroquinate dehydratase activity"/>
    <property type="evidence" value="ECO:0007669"/>
    <property type="project" value="UniProtKB-UniRule"/>
</dbReference>
<dbReference type="GO" id="GO:0046279">
    <property type="term" value="P:3,4-dihydroxybenzoate biosynthetic process"/>
    <property type="evidence" value="ECO:0007669"/>
    <property type="project" value="TreeGrafter"/>
</dbReference>
<dbReference type="GO" id="GO:0008652">
    <property type="term" value="P:amino acid biosynthetic process"/>
    <property type="evidence" value="ECO:0007669"/>
    <property type="project" value="UniProtKB-KW"/>
</dbReference>
<dbReference type="GO" id="GO:0009073">
    <property type="term" value="P:aromatic amino acid family biosynthetic process"/>
    <property type="evidence" value="ECO:0007669"/>
    <property type="project" value="UniProtKB-KW"/>
</dbReference>
<dbReference type="GO" id="GO:0009423">
    <property type="term" value="P:chorismate biosynthetic process"/>
    <property type="evidence" value="ECO:0007669"/>
    <property type="project" value="UniProtKB-UniRule"/>
</dbReference>
<dbReference type="CDD" id="cd00502">
    <property type="entry name" value="DHQase_I"/>
    <property type="match status" value="1"/>
</dbReference>
<dbReference type="FunFam" id="3.20.20.70:FF:000047">
    <property type="entry name" value="3-dehydroquinate dehydratase"/>
    <property type="match status" value="1"/>
</dbReference>
<dbReference type="Gene3D" id="3.20.20.70">
    <property type="entry name" value="Aldolase class I"/>
    <property type="match status" value="1"/>
</dbReference>
<dbReference type="HAMAP" id="MF_00214">
    <property type="entry name" value="AroD"/>
    <property type="match status" value="1"/>
</dbReference>
<dbReference type="InterPro" id="IPR018508">
    <property type="entry name" value="3-dehydroquinate_DH_AS"/>
</dbReference>
<dbReference type="InterPro" id="IPR013785">
    <property type="entry name" value="Aldolase_TIM"/>
</dbReference>
<dbReference type="InterPro" id="IPR001381">
    <property type="entry name" value="DHquinase_I"/>
</dbReference>
<dbReference type="InterPro" id="IPR050146">
    <property type="entry name" value="Type-I_3-dehydroquinase"/>
</dbReference>
<dbReference type="NCBIfam" id="TIGR01093">
    <property type="entry name" value="aroD"/>
    <property type="match status" value="1"/>
</dbReference>
<dbReference type="PANTHER" id="PTHR43699">
    <property type="entry name" value="3-DEHYDROQUINATE DEHYDRATASE"/>
    <property type="match status" value="1"/>
</dbReference>
<dbReference type="PANTHER" id="PTHR43699:SF1">
    <property type="entry name" value="3-DEHYDROQUINATE DEHYDRATASE"/>
    <property type="match status" value="1"/>
</dbReference>
<dbReference type="Pfam" id="PF01487">
    <property type="entry name" value="DHquinase_I"/>
    <property type="match status" value="1"/>
</dbReference>
<dbReference type="SUPFAM" id="SSF51569">
    <property type="entry name" value="Aldolase"/>
    <property type="match status" value="1"/>
</dbReference>
<dbReference type="PROSITE" id="PS01028">
    <property type="entry name" value="DEHYDROQUINASE_I"/>
    <property type="match status" value="1"/>
</dbReference>
<proteinExistence type="inferred from homology"/>
<keyword id="KW-0028">Amino-acid biosynthesis</keyword>
<keyword id="KW-0057">Aromatic amino acid biosynthesis</keyword>
<keyword id="KW-0456">Lyase</keyword>
<keyword id="KW-0704">Schiff base</keyword>
<reference key="1">
    <citation type="journal article" date="2007" name="Nat. Biotechnol.">
        <title>Comparative analysis of the complete genome sequence of the plant growth-promoting bacterium Bacillus amyloliquefaciens FZB42.</title>
        <authorList>
            <person name="Chen X.H."/>
            <person name="Koumoutsi A."/>
            <person name="Scholz R."/>
            <person name="Eisenreich A."/>
            <person name="Schneider K."/>
            <person name="Heinemeyer I."/>
            <person name="Morgenstern B."/>
            <person name="Voss B."/>
            <person name="Hess W.R."/>
            <person name="Reva O."/>
            <person name="Junge H."/>
            <person name="Voigt B."/>
            <person name="Jungblut P.R."/>
            <person name="Vater J."/>
            <person name="Suessmuth R."/>
            <person name="Liesegang H."/>
            <person name="Strittmatter A."/>
            <person name="Gottschalk G."/>
            <person name="Borriss R."/>
        </authorList>
    </citation>
    <scope>NUCLEOTIDE SEQUENCE [LARGE SCALE GENOMIC DNA]</scope>
    <source>
        <strain>DSM 23117 / BGSC 10A6 / LMG 26770 / FZB42</strain>
    </source>
</reference>
<feature type="chain" id="PRO_1000043160" description="3-dehydroquinate dehydratase">
    <location>
        <begin position="1"/>
        <end position="253"/>
    </location>
</feature>
<feature type="active site" description="Proton donor/acceptor" evidence="1">
    <location>
        <position position="143"/>
    </location>
</feature>
<feature type="active site" description="Schiff-base intermediate with substrate" evidence="1">
    <location>
        <position position="170"/>
    </location>
</feature>
<feature type="binding site" evidence="1">
    <location>
        <begin position="46"/>
        <end position="48"/>
    </location>
    <ligand>
        <name>3-dehydroquinate</name>
        <dbReference type="ChEBI" id="CHEBI:32364"/>
    </ligand>
</feature>
<feature type="binding site" evidence="1">
    <location>
        <position position="82"/>
    </location>
    <ligand>
        <name>3-dehydroquinate</name>
        <dbReference type="ChEBI" id="CHEBI:32364"/>
    </ligand>
</feature>
<feature type="binding site" evidence="1">
    <location>
        <position position="213"/>
    </location>
    <ligand>
        <name>3-dehydroquinate</name>
        <dbReference type="ChEBI" id="CHEBI:32364"/>
    </ligand>
</feature>
<feature type="binding site" evidence="1">
    <location>
        <position position="232"/>
    </location>
    <ligand>
        <name>3-dehydroquinate</name>
        <dbReference type="ChEBI" id="CHEBI:32364"/>
    </ligand>
</feature>
<feature type="binding site" evidence="1">
    <location>
        <position position="236"/>
    </location>
    <ligand>
        <name>3-dehydroquinate</name>
        <dbReference type="ChEBI" id="CHEBI:32364"/>
    </ligand>
</feature>
<name>AROD_BACVZ</name>
<organism>
    <name type="scientific">Bacillus velezensis (strain DSM 23117 / BGSC 10A6 / LMG 26770 / FZB42)</name>
    <name type="common">Bacillus amyloliquefaciens subsp. plantarum</name>
    <dbReference type="NCBI Taxonomy" id="326423"/>
    <lineage>
        <taxon>Bacteria</taxon>
        <taxon>Bacillati</taxon>
        <taxon>Bacillota</taxon>
        <taxon>Bacilli</taxon>
        <taxon>Bacillales</taxon>
        <taxon>Bacillaceae</taxon>
        <taxon>Bacillus</taxon>
        <taxon>Bacillus amyloliquefaciens group</taxon>
    </lineage>
</organism>
<accession>A7Z2G6</accession>
<protein>
    <recommendedName>
        <fullName evidence="1">3-dehydroquinate dehydratase</fullName>
        <shortName evidence="1">3-dehydroquinase</shortName>
        <ecNumber evidence="1">4.2.1.10</ecNumber>
    </recommendedName>
    <alternativeName>
        <fullName evidence="1">Type I DHQase</fullName>
    </alternativeName>
    <alternativeName>
        <fullName evidence="1">Type I dehydroquinase</fullName>
        <shortName evidence="1">DHQ1</shortName>
    </alternativeName>
</protein>
<evidence type="ECO:0000255" key="1">
    <source>
        <dbReference type="HAMAP-Rule" id="MF_00214"/>
    </source>
</evidence>
<sequence>MQSITIRNTVIGEGLPKIIVPLMAAGEKELLEEIEAVNRLRPDIIEWRADVYEHVDSLDAVKDMLEMLRKAAGATPLLFTFRTHKEGGNKVIDDRFYIELLKTAIETKHIDLADVELFTGEAEVKLIVKTAEDNGVYVVMSNHDFHQTPKKEEIISRLRNMQAYGAHIPKIAVMPQSTEDVFVLLDATHTMKTQYADRPIITMSMAGTGLISRLAGEVFGSACTFGAGKEASAPGQIPVEELRSVLSILNKHM</sequence>
<comment type="function">
    <text evidence="1">Involved in the third step of the chorismate pathway, which leads to the biosynthesis of aromatic amino acids. Catalyzes the cis-dehydration of 3-dehydroquinate (DHQ) and introduces the first double bond of the aromatic ring to yield 3-dehydroshikimate.</text>
</comment>
<comment type="catalytic activity">
    <reaction evidence="1">
        <text>3-dehydroquinate = 3-dehydroshikimate + H2O</text>
        <dbReference type="Rhea" id="RHEA:21096"/>
        <dbReference type="ChEBI" id="CHEBI:15377"/>
        <dbReference type="ChEBI" id="CHEBI:16630"/>
        <dbReference type="ChEBI" id="CHEBI:32364"/>
        <dbReference type="EC" id="4.2.1.10"/>
    </reaction>
</comment>
<comment type="pathway">
    <text evidence="1">Metabolic intermediate biosynthesis; chorismate biosynthesis; chorismate from D-erythrose 4-phosphate and phosphoenolpyruvate: step 3/7.</text>
</comment>
<comment type="subunit">
    <text evidence="1">Homodimer.</text>
</comment>
<comment type="similarity">
    <text evidence="1">Belongs to the type-I 3-dehydroquinase family.</text>
</comment>
<gene>
    <name evidence="1" type="primary">aroD</name>
    <name type="ordered locus">RBAM_008080</name>
</gene>